<comment type="function">
    <text evidence="3">Functions in nuclear protein import. Binds specifically and directly to substrates containing either a simple or bipartite NLS motif. Promotes docking of import substrates to the nuclear envelope. In conjunction with importin beta-1, mediates the nuclear envelope docking, and the subsequent translocation into the nucleus of the constitutive morphogenetic 1 (COP1) protein containing bipartite NLS motif.</text>
</comment>
<comment type="subunit">
    <text>Forms a complex with importin subunit beta-1. The whole complex, most stable and composed of importin alpha and importin beta, is referred to as PTAC or pore targeting complex.</text>
</comment>
<comment type="subcellular location">
    <subcellularLocation>
        <location evidence="3">Cytoplasm</location>
        <location evidence="3">Perinuclear region</location>
    </subcellularLocation>
</comment>
<comment type="tissue specificity">
    <text evidence="3">Highly expressed in root and weakly in callus, etiolated leaf and green leaf.</text>
</comment>
<comment type="induction">
    <text evidence="3">Slightly increased by dark treatment.</text>
</comment>
<comment type="similarity">
    <text evidence="4">Belongs to the importin alpha family.</text>
</comment>
<protein>
    <recommendedName>
        <fullName>Importin subunit alpha-1b</fullName>
    </recommendedName>
</protein>
<sequence>MSLRPSERAEVRRSRYKVAVDADEGRRRREDNMVEIRKSRREESLLKKRRDGLPAAAAAAAAASPLLAHSSALQQKLEGLPAMVQAVQSDDSAVQLEATTQFRKLLSIERSPPIEEVINTGVVPRFIAFLQREDYPQLQFEAAWALTNIASGTSDNTKVVVESGAVPIFVKLLSSPSEDVREQAVWALGNVAGDSPKCRDLVLASGGLYPLLQQLNEHAKLSMLRNATWTLSNFCRGKPQPNFEQVKPALSALQRLIHSQDEEVLTDACWALSYLSDGTNDKIQAVIESGVFPRLVELLMHPSASVLIPALRTVGNIVTGDDMQTQCVIDHQALPCLLNLLTNNHKKSIKKEACWTISNITAGNREQIQAVINANIIAPLVHLLQTAEFDIKKEAAWAISNATSGGTHDQIKYLVAQGCIKPLCDLLVCPDPRIVTVCLEGLENILKVGEAEKNLGAGDVNSYAQMIDDAEGLEKIENLQSHDNTEIYEKAVKMLESYWLEEEDDAMPSGDNAQNGFNFGNQQPNVPSGGFNFG</sequence>
<keyword id="KW-0963">Cytoplasm</keyword>
<keyword id="KW-0653">Protein transport</keyword>
<keyword id="KW-1185">Reference proteome</keyword>
<keyword id="KW-0677">Repeat</keyword>
<keyword id="KW-0813">Transport</keyword>
<reference key="1">
    <citation type="journal article" date="2001" name="J. Biol. Chem.">
        <title>Molecular cloning of a novel importin alpha homologue from rice, by which constitutive photomorphogenic 1 (COP1) nuclear localization signal (NLS)-protein is preferentially nuclear imported.</title>
        <authorList>
            <person name="Jiang C.-J."/>
            <person name="Shoji K."/>
            <person name="Matsuki R."/>
            <person name="Baba A."/>
            <person name="Inagaki N."/>
            <person name="Ban H."/>
            <person name="Iwasaki T."/>
            <person name="Imamoto N."/>
            <person name="Yoneda Y."/>
            <person name="Deng X.-W."/>
            <person name="Yamamoto N."/>
        </authorList>
    </citation>
    <scope>NUCLEOTIDE SEQUENCE [MRNA]</scope>
    <scope>FUNCTION</scope>
    <scope>TISSUE SPECIFICITY</scope>
    <scope>INDUCTION</scope>
    <scope>SUBCELLULAR LOCATION</scope>
    <scope>INTERACTION WITH IMPORTIN BETA-1</scope>
    <source>
        <strain>cv. Nipponbare</strain>
        <tissue>Leaf</tissue>
    </source>
</reference>
<reference key="2">
    <citation type="journal article" date="2005" name="Mol. Genet. Genomics">
        <title>A fine physical map of the rice chromosome 5.</title>
        <authorList>
            <person name="Cheng C.-H."/>
            <person name="Chung M.C."/>
            <person name="Liu S.-M."/>
            <person name="Chen S.-K."/>
            <person name="Kao F.Y."/>
            <person name="Lin S.-J."/>
            <person name="Hsiao S.-H."/>
            <person name="Tseng I.C."/>
            <person name="Hsing Y.-I.C."/>
            <person name="Wu H.-P."/>
            <person name="Chen C.-S."/>
            <person name="Shaw J.-F."/>
            <person name="Wu J."/>
            <person name="Matsumoto T."/>
            <person name="Sasaki T."/>
            <person name="Chen H.-C."/>
            <person name="Chow T.-Y."/>
        </authorList>
    </citation>
    <scope>NUCLEOTIDE SEQUENCE [LARGE SCALE GENOMIC DNA]</scope>
    <source>
        <strain>cv. Nipponbare</strain>
    </source>
</reference>
<reference key="3">
    <citation type="journal article" date="2005" name="Nature">
        <title>The map-based sequence of the rice genome.</title>
        <authorList>
            <consortium name="International rice genome sequencing project (IRGSP)"/>
        </authorList>
    </citation>
    <scope>NUCLEOTIDE SEQUENCE [LARGE SCALE GENOMIC DNA]</scope>
    <source>
        <strain>cv. Nipponbare</strain>
    </source>
</reference>
<reference key="4">
    <citation type="journal article" date="2013" name="Rice">
        <title>Improvement of the Oryza sativa Nipponbare reference genome using next generation sequence and optical map data.</title>
        <authorList>
            <person name="Kawahara Y."/>
            <person name="de la Bastide M."/>
            <person name="Hamilton J.P."/>
            <person name="Kanamori H."/>
            <person name="McCombie W.R."/>
            <person name="Ouyang S."/>
            <person name="Schwartz D.C."/>
            <person name="Tanaka T."/>
            <person name="Wu J."/>
            <person name="Zhou S."/>
            <person name="Childs K.L."/>
            <person name="Davidson R.M."/>
            <person name="Lin H."/>
            <person name="Quesada-Ocampo L."/>
            <person name="Vaillancourt B."/>
            <person name="Sakai H."/>
            <person name="Lee S.S."/>
            <person name="Kim J."/>
            <person name="Numa H."/>
            <person name="Itoh T."/>
            <person name="Buell C.R."/>
            <person name="Matsumoto T."/>
        </authorList>
    </citation>
    <scope>GENOME REANNOTATION</scope>
    <source>
        <strain>cv. Nipponbare</strain>
    </source>
</reference>
<gene>
    <name type="ordered locus">Os05g0155601</name>
    <name type="ordered locus">LOC_Os05g06350</name>
</gene>
<evidence type="ECO:0000255" key="1">
    <source>
        <dbReference type="PROSITE-ProRule" id="PRU00561"/>
    </source>
</evidence>
<evidence type="ECO:0000256" key="2">
    <source>
        <dbReference type="SAM" id="MobiDB-lite"/>
    </source>
</evidence>
<evidence type="ECO:0000269" key="3">
    <source>
    </source>
</evidence>
<evidence type="ECO:0000305" key="4"/>
<proteinExistence type="evidence at protein level"/>
<organism>
    <name type="scientific">Oryza sativa subsp. japonica</name>
    <name type="common">Rice</name>
    <dbReference type="NCBI Taxonomy" id="39947"/>
    <lineage>
        <taxon>Eukaryota</taxon>
        <taxon>Viridiplantae</taxon>
        <taxon>Streptophyta</taxon>
        <taxon>Embryophyta</taxon>
        <taxon>Tracheophyta</taxon>
        <taxon>Spermatophyta</taxon>
        <taxon>Magnoliopsida</taxon>
        <taxon>Liliopsida</taxon>
        <taxon>Poales</taxon>
        <taxon>Poaceae</taxon>
        <taxon>BOP clade</taxon>
        <taxon>Oryzoideae</taxon>
        <taxon>Oryzeae</taxon>
        <taxon>Oryzinae</taxon>
        <taxon>Oryza</taxon>
        <taxon>Oryza sativa</taxon>
    </lineage>
</organism>
<feature type="chain" id="PRO_0000120741" description="Importin subunit alpha-1b">
    <location>
        <begin position="1"/>
        <end position="534"/>
    </location>
</feature>
<feature type="domain" description="IBB" evidence="1">
    <location>
        <begin position="1"/>
        <end position="58"/>
    </location>
</feature>
<feature type="repeat" description="ARM 1">
    <location>
        <begin position="111"/>
        <end position="151"/>
    </location>
</feature>
<feature type="repeat" description="ARM 2">
    <location>
        <begin position="154"/>
        <end position="193"/>
    </location>
</feature>
<feature type="repeat" description="ARM 3">
    <location>
        <begin position="196"/>
        <end position="236"/>
    </location>
</feature>
<feature type="repeat" description="ARM 4">
    <location>
        <begin position="238"/>
        <end position="277"/>
    </location>
</feature>
<feature type="repeat" description="ARM 5">
    <location>
        <begin position="280"/>
        <end position="319"/>
    </location>
</feature>
<feature type="repeat" description="ARM 6">
    <location>
        <begin position="322"/>
        <end position="362"/>
    </location>
</feature>
<feature type="repeat" description="ARM 7">
    <location>
        <begin position="365"/>
        <end position="404"/>
    </location>
</feature>
<feature type="repeat" description="ARM 8">
    <location>
        <begin position="408"/>
        <end position="447"/>
    </location>
</feature>
<feature type="region of interest" description="Disordered" evidence="2">
    <location>
        <begin position="505"/>
        <end position="534"/>
    </location>
</feature>
<feature type="compositionally biased region" description="Low complexity" evidence="2">
    <location>
        <begin position="514"/>
        <end position="523"/>
    </location>
</feature>
<feature type="sequence conflict" description="In Ref. 1; BAA88950." evidence="4" ref="1">
    <original>F</original>
    <variation>L</variation>
    <location>
        <position position="519"/>
    </location>
</feature>
<dbReference type="EMBL" id="AB024311">
    <property type="protein sequence ID" value="BAA88950.1"/>
    <property type="molecule type" value="mRNA"/>
</dbReference>
<dbReference type="EMBL" id="AC087551">
    <property type="status" value="NOT_ANNOTATED_CDS"/>
    <property type="molecule type" value="Genomic_DNA"/>
</dbReference>
<dbReference type="EMBL" id="AP014961">
    <property type="protein sequence ID" value="BAS92358.1"/>
    <property type="molecule type" value="Genomic_DNA"/>
</dbReference>
<dbReference type="RefSeq" id="XP_015639761.1">
    <property type="nucleotide sequence ID" value="XM_015784275.1"/>
</dbReference>
<dbReference type="SMR" id="Q9SLX0"/>
<dbReference type="FunCoup" id="Q9SLX0">
    <property type="interactions" value="3073"/>
</dbReference>
<dbReference type="STRING" id="39947.Q9SLX0"/>
<dbReference type="PaxDb" id="39947-Q9SLX0"/>
<dbReference type="EnsemblPlants" id="Os05t0155601-01">
    <property type="protein sequence ID" value="Os05t0155601-01"/>
    <property type="gene ID" value="Os05g0155601"/>
</dbReference>
<dbReference type="Gramene" id="Os05t0155601-01">
    <property type="protein sequence ID" value="Os05t0155601-01"/>
    <property type="gene ID" value="Os05g0155601"/>
</dbReference>
<dbReference type="eggNOG" id="KOG0166">
    <property type="taxonomic scope" value="Eukaryota"/>
</dbReference>
<dbReference type="HOGENOM" id="CLU_018084_5_0_1"/>
<dbReference type="InParanoid" id="Q9SLX0"/>
<dbReference type="OMA" id="NAYAQMI"/>
<dbReference type="OrthoDB" id="29145at2759"/>
<dbReference type="Proteomes" id="UP000000763">
    <property type="component" value="Chromosome 5"/>
</dbReference>
<dbReference type="Proteomes" id="UP000059680">
    <property type="component" value="Chromosome 5"/>
</dbReference>
<dbReference type="ExpressionAtlas" id="Q9SLX0">
    <property type="expression patterns" value="baseline and differential"/>
</dbReference>
<dbReference type="GO" id="GO:0005634">
    <property type="term" value="C:nucleus"/>
    <property type="evidence" value="ECO:0000318"/>
    <property type="project" value="GO_Central"/>
</dbReference>
<dbReference type="GO" id="GO:0048471">
    <property type="term" value="C:perinuclear region of cytoplasm"/>
    <property type="evidence" value="ECO:0007669"/>
    <property type="project" value="UniProtKB-SubCell"/>
</dbReference>
<dbReference type="GO" id="GO:0061608">
    <property type="term" value="F:nuclear import signal receptor activity"/>
    <property type="evidence" value="ECO:0000318"/>
    <property type="project" value="GO_Central"/>
</dbReference>
<dbReference type="GO" id="GO:0008139">
    <property type="term" value="F:nuclear localization sequence binding"/>
    <property type="evidence" value="ECO:0000318"/>
    <property type="project" value="GO_Central"/>
</dbReference>
<dbReference type="GO" id="GO:0006607">
    <property type="term" value="P:NLS-bearing protein import into nucleus"/>
    <property type="evidence" value="ECO:0000318"/>
    <property type="project" value="GO_Central"/>
</dbReference>
<dbReference type="FunFam" id="1.20.5.690:FF:000002">
    <property type="entry name" value="Importin subunit alpha"/>
    <property type="match status" value="1"/>
</dbReference>
<dbReference type="FunFam" id="1.25.10.10:FF:000040">
    <property type="entry name" value="Importin subunit alpha"/>
    <property type="match status" value="1"/>
</dbReference>
<dbReference type="Gene3D" id="1.20.5.690">
    <property type="entry name" value="Importin-alpha, importin-beta-binding domain"/>
    <property type="match status" value="1"/>
</dbReference>
<dbReference type="Gene3D" id="1.25.10.10">
    <property type="entry name" value="Leucine-rich Repeat Variant"/>
    <property type="match status" value="1"/>
</dbReference>
<dbReference type="InterPro" id="IPR011989">
    <property type="entry name" value="ARM-like"/>
</dbReference>
<dbReference type="InterPro" id="IPR016024">
    <property type="entry name" value="ARM-type_fold"/>
</dbReference>
<dbReference type="InterPro" id="IPR032413">
    <property type="entry name" value="Arm_3"/>
</dbReference>
<dbReference type="InterPro" id="IPR000225">
    <property type="entry name" value="Armadillo"/>
</dbReference>
<dbReference type="InterPro" id="IPR002652">
    <property type="entry name" value="Importin-a_IBB"/>
</dbReference>
<dbReference type="InterPro" id="IPR036975">
    <property type="entry name" value="Importin-a_IBB_sf"/>
</dbReference>
<dbReference type="InterPro" id="IPR024931">
    <property type="entry name" value="Importin_alpha"/>
</dbReference>
<dbReference type="PANTHER" id="PTHR23316">
    <property type="entry name" value="IMPORTIN ALPHA"/>
    <property type="match status" value="1"/>
</dbReference>
<dbReference type="Pfam" id="PF00514">
    <property type="entry name" value="Arm"/>
    <property type="match status" value="8"/>
</dbReference>
<dbReference type="Pfam" id="PF16186">
    <property type="entry name" value="Arm_3"/>
    <property type="match status" value="1"/>
</dbReference>
<dbReference type="Pfam" id="PF01749">
    <property type="entry name" value="IBB"/>
    <property type="match status" value="1"/>
</dbReference>
<dbReference type="PIRSF" id="PIRSF005673">
    <property type="entry name" value="Importin_alpha"/>
    <property type="match status" value="1"/>
</dbReference>
<dbReference type="SMART" id="SM00185">
    <property type="entry name" value="ARM"/>
    <property type="match status" value="8"/>
</dbReference>
<dbReference type="SUPFAM" id="SSF48371">
    <property type="entry name" value="ARM repeat"/>
    <property type="match status" value="1"/>
</dbReference>
<dbReference type="PROSITE" id="PS50176">
    <property type="entry name" value="ARM_REPEAT"/>
    <property type="match status" value="3"/>
</dbReference>
<dbReference type="PROSITE" id="PS51214">
    <property type="entry name" value="IBB"/>
    <property type="match status" value="1"/>
</dbReference>
<name>IMA1B_ORYSJ</name>
<accession>Q9SLX0</accession>